<proteinExistence type="evidence at protein level"/>
<dbReference type="EMBL" id="Z28075">
    <property type="protein sequence ID" value="CAA81913.1"/>
    <property type="molecule type" value="Genomic_DNA"/>
</dbReference>
<dbReference type="EMBL" id="BK006944">
    <property type="protein sequence ID" value="DAA09081.1"/>
    <property type="molecule type" value="Genomic_DNA"/>
</dbReference>
<dbReference type="PIR" id="S37900">
    <property type="entry name" value="S37900"/>
</dbReference>
<dbReference type="BioGRID" id="34056">
    <property type="interactions" value="146"/>
</dbReference>
<dbReference type="DIP" id="DIP-1993N"/>
<dbReference type="FunCoup" id="P36083">
    <property type="interactions" value="45"/>
</dbReference>
<dbReference type="IntAct" id="P36083">
    <property type="interactions" value="5"/>
</dbReference>
<dbReference type="MINT" id="P36083"/>
<dbReference type="STRING" id="4932.YKL075C"/>
<dbReference type="iPTMnet" id="P36083"/>
<dbReference type="PaxDb" id="4932-YKL075C"/>
<dbReference type="PeptideAtlas" id="P36083"/>
<dbReference type="TopDownProteomics" id="P36083"/>
<dbReference type="EnsemblFungi" id="YKL075C_mRNA">
    <property type="protein sequence ID" value="YKL075C"/>
    <property type="gene ID" value="YKL075C"/>
</dbReference>
<dbReference type="KEGG" id="sce:YKL075C"/>
<dbReference type="AGR" id="SGD:S000001558"/>
<dbReference type="SGD" id="S000001558">
    <property type="gene designation" value="YKL075C"/>
</dbReference>
<dbReference type="VEuPathDB" id="FungiDB:YKL075C"/>
<dbReference type="eggNOG" id="ENOG502QWER">
    <property type="taxonomic scope" value="Eukaryota"/>
</dbReference>
<dbReference type="HOGENOM" id="CLU_647344_0_0_1"/>
<dbReference type="InParanoid" id="P36083"/>
<dbReference type="OMA" id="QRGGPEY"/>
<dbReference type="OrthoDB" id="4032461at2759"/>
<dbReference type="BioCyc" id="YEAST:G3O-31871-MONOMER"/>
<dbReference type="BioGRID-ORCS" id="853787">
    <property type="hits" value="4 hits in 10 CRISPR screens"/>
</dbReference>
<dbReference type="PRO" id="PR:P36083"/>
<dbReference type="Proteomes" id="UP000002311">
    <property type="component" value="Chromosome XI"/>
</dbReference>
<dbReference type="RNAct" id="P36083">
    <property type="molecule type" value="protein"/>
</dbReference>
<dbReference type="GO" id="GO:0005737">
    <property type="term" value="C:cytoplasm"/>
    <property type="evidence" value="ECO:0007005"/>
    <property type="project" value="SGD"/>
</dbReference>
<dbReference type="GO" id="GO:0005829">
    <property type="term" value="C:cytosol"/>
    <property type="evidence" value="ECO:0000314"/>
    <property type="project" value="SGD"/>
</dbReference>
<dbReference type="GO" id="GO:0009081">
    <property type="term" value="P:branched-chain amino acid metabolic process"/>
    <property type="evidence" value="ECO:0000315"/>
    <property type="project" value="SGD"/>
</dbReference>
<dbReference type="GO" id="GO:0009410">
    <property type="term" value="P:response to xenobiotic stimulus"/>
    <property type="evidence" value="ECO:0007001"/>
    <property type="project" value="SGD"/>
</dbReference>
<evidence type="ECO:0000256" key="1">
    <source>
        <dbReference type="SAM" id="MobiDB-lite"/>
    </source>
</evidence>
<evidence type="ECO:0000269" key="2">
    <source>
    </source>
</evidence>
<organism>
    <name type="scientific">Saccharomyces cerevisiae (strain ATCC 204508 / S288c)</name>
    <name type="common">Baker's yeast</name>
    <dbReference type="NCBI Taxonomy" id="559292"/>
    <lineage>
        <taxon>Eukaryota</taxon>
        <taxon>Fungi</taxon>
        <taxon>Dikarya</taxon>
        <taxon>Ascomycota</taxon>
        <taxon>Saccharomycotina</taxon>
        <taxon>Saccharomycetes</taxon>
        <taxon>Saccharomycetales</taxon>
        <taxon>Saccharomycetaceae</taxon>
        <taxon>Saccharomyces</taxon>
    </lineage>
</organism>
<comment type="interaction">
    <interactant intactId="EBI-26750">
        <id>P36083</id>
    </interactant>
    <interactant intactId="EBI-28788">
        <id>P53935</id>
        <label>NST1</label>
    </interactant>
    <organismsDiffer>false</organismsDiffer>
    <experiments>3</experiments>
</comment>
<comment type="miscellaneous">
    <text evidence="2">Present with 98 molecules/cell in log phase SD medium.</text>
</comment>
<accession>P36083</accession>
<accession>D6VXL1</accession>
<reference key="1">
    <citation type="journal article" date="1994" name="Nature">
        <title>Complete DNA sequence of yeast chromosome XI.</title>
        <authorList>
            <person name="Dujon B."/>
            <person name="Alexandraki D."/>
            <person name="Andre B."/>
            <person name="Ansorge W."/>
            <person name="Baladron V."/>
            <person name="Ballesta J.P.G."/>
            <person name="Banrevi A."/>
            <person name="Bolle P.-A."/>
            <person name="Bolotin-Fukuhara M."/>
            <person name="Bossier P."/>
            <person name="Bou G."/>
            <person name="Boyer J."/>
            <person name="Buitrago M.J."/>
            <person name="Cheret G."/>
            <person name="Colleaux L."/>
            <person name="Daignan-Fornier B."/>
            <person name="del Rey F."/>
            <person name="Dion C."/>
            <person name="Domdey H."/>
            <person name="Duesterhoeft A."/>
            <person name="Duesterhus S."/>
            <person name="Entian K.-D."/>
            <person name="Erfle H."/>
            <person name="Esteban P.F."/>
            <person name="Feldmann H."/>
            <person name="Fernandes L."/>
            <person name="Fobo G.M."/>
            <person name="Fritz C."/>
            <person name="Fukuhara H."/>
            <person name="Gabel C."/>
            <person name="Gaillon L."/>
            <person name="Garcia-Cantalejo J.M."/>
            <person name="Garcia-Ramirez J.J."/>
            <person name="Gent M.E."/>
            <person name="Ghazvini M."/>
            <person name="Goffeau A."/>
            <person name="Gonzalez A."/>
            <person name="Grothues D."/>
            <person name="Guerreiro P."/>
            <person name="Hegemann J.H."/>
            <person name="Hewitt N."/>
            <person name="Hilger F."/>
            <person name="Hollenberg C.P."/>
            <person name="Horaitis O."/>
            <person name="Indge K.J."/>
            <person name="Jacquier A."/>
            <person name="James C.M."/>
            <person name="Jauniaux J.-C."/>
            <person name="Jimenez A."/>
            <person name="Keuchel H."/>
            <person name="Kirchrath L."/>
            <person name="Kleine K."/>
            <person name="Koetter P."/>
            <person name="Legrain P."/>
            <person name="Liebl S."/>
            <person name="Louis E.J."/>
            <person name="Maia e Silva A."/>
            <person name="Marck C."/>
            <person name="Monnier A.-L."/>
            <person name="Moestl D."/>
            <person name="Mueller S."/>
            <person name="Obermaier B."/>
            <person name="Oliver S.G."/>
            <person name="Pallier C."/>
            <person name="Pascolo S."/>
            <person name="Pfeiffer F."/>
            <person name="Philippsen P."/>
            <person name="Planta R.J."/>
            <person name="Pohl F.M."/>
            <person name="Pohl T.M."/>
            <person name="Poehlmann R."/>
            <person name="Portetelle D."/>
            <person name="Purnelle B."/>
            <person name="Puzos V."/>
            <person name="Ramezani Rad M."/>
            <person name="Rasmussen S.W."/>
            <person name="Remacha M.A."/>
            <person name="Revuelta J.L."/>
            <person name="Richard G.-F."/>
            <person name="Rieger M."/>
            <person name="Rodrigues-Pousada C."/>
            <person name="Rose M."/>
            <person name="Rupp T."/>
            <person name="Santos M.A."/>
            <person name="Schwager C."/>
            <person name="Sensen C."/>
            <person name="Skala J."/>
            <person name="Soares H."/>
            <person name="Sor F."/>
            <person name="Stegemann J."/>
            <person name="Tettelin H."/>
            <person name="Thierry A."/>
            <person name="Tzermia M."/>
            <person name="Urrestarazu L.A."/>
            <person name="van Dyck L."/>
            <person name="van Vliet-Reedijk J.C."/>
            <person name="Valens M."/>
            <person name="Vandenbol M."/>
            <person name="Vilela C."/>
            <person name="Vissers S."/>
            <person name="von Wettstein D."/>
            <person name="Voss H."/>
            <person name="Wiemann S."/>
            <person name="Xu G."/>
            <person name="Zimmermann J."/>
            <person name="Haasemann M."/>
            <person name="Becker I."/>
            <person name="Mewes H.-W."/>
        </authorList>
    </citation>
    <scope>NUCLEOTIDE SEQUENCE [LARGE SCALE GENOMIC DNA]</scope>
    <source>
        <strain>ATCC 204508 / S288c</strain>
    </source>
</reference>
<reference key="2">
    <citation type="journal article" date="2014" name="G3 (Bethesda)">
        <title>The reference genome sequence of Saccharomyces cerevisiae: Then and now.</title>
        <authorList>
            <person name="Engel S.R."/>
            <person name="Dietrich F.S."/>
            <person name="Fisk D.G."/>
            <person name="Binkley G."/>
            <person name="Balakrishnan R."/>
            <person name="Costanzo M.C."/>
            <person name="Dwight S.S."/>
            <person name="Hitz B.C."/>
            <person name="Karra K."/>
            <person name="Nash R.S."/>
            <person name="Weng S."/>
            <person name="Wong E.D."/>
            <person name="Lloyd P."/>
            <person name="Skrzypek M.S."/>
            <person name="Miyasato S.R."/>
            <person name="Simison M."/>
            <person name="Cherry J.M."/>
        </authorList>
    </citation>
    <scope>GENOME REANNOTATION</scope>
    <source>
        <strain>ATCC 204508 / S288c</strain>
    </source>
</reference>
<reference key="3">
    <citation type="journal article" date="2003" name="Nature">
        <title>Global analysis of protein expression in yeast.</title>
        <authorList>
            <person name="Ghaemmaghami S."/>
            <person name="Huh W.-K."/>
            <person name="Bower K."/>
            <person name="Howson R.W."/>
            <person name="Belle A."/>
            <person name="Dephoure N."/>
            <person name="O'Shea E.K."/>
            <person name="Weissman J.S."/>
        </authorList>
    </citation>
    <scope>LEVEL OF PROTEIN EXPRESSION [LARGE SCALE ANALYSIS]</scope>
</reference>
<keyword id="KW-1185">Reference proteome</keyword>
<gene>
    <name type="ordered locus">YKL075C</name>
</gene>
<protein>
    <recommendedName>
        <fullName>Uncharacterized protein YKL075C</fullName>
    </recommendedName>
</protein>
<sequence length="450" mass="52088">MAKDLLPKQAANEPSLKDCTCKRCLKLGASKEKKIRRKKKGEEKRERHYGNRRKLTFNFLKHTNMENTNYDVITSVGYLNEKYGLKKSHYIEKFIKCIHRKINIDVSKITDAYVNSLNPWVKVKLFLLLVTLSEKGGPEYWLDKTDGEKNSEASSTDNSLENSTKGADSAGSTALRDEMVKSHKNLFPTLTEQIIQHNINQDFTESTYDEDYVFSSIWANFMEGLINHYLEKVIVPYSEMKVCQQLYKPMMKIISLYNEYNELMVKSEKNGFLPSLQDSENVQGDKGEKESKDDAVSQERLERAQKLLWQAREDIPKTISKELTLLSEMYSTLSADEQDYELDEFVCCAEEYIELEYLPALVDVLFANCGTNNFWKIMLVLEPFFYYIEDVGGDDDEDEDNVDNSEGDEESLLSRNVEGDDNVVERHFKPDPRVITLEKICEVAARQKWI</sequence>
<name>YKH5_YEAST</name>
<feature type="chain" id="PRO_0000203170" description="Uncharacterized protein YKL075C">
    <location>
        <begin position="1"/>
        <end position="450"/>
    </location>
</feature>
<feature type="region of interest" description="Disordered" evidence="1">
    <location>
        <begin position="141"/>
        <end position="171"/>
    </location>
</feature>
<feature type="region of interest" description="Disordered" evidence="1">
    <location>
        <begin position="276"/>
        <end position="298"/>
    </location>
</feature>
<feature type="region of interest" description="Disordered" evidence="1">
    <location>
        <begin position="395"/>
        <end position="416"/>
    </location>
</feature>
<feature type="compositionally biased region" description="Basic and acidic residues" evidence="1">
    <location>
        <begin position="141"/>
        <end position="151"/>
    </location>
</feature>
<feature type="compositionally biased region" description="Polar residues" evidence="1">
    <location>
        <begin position="152"/>
        <end position="171"/>
    </location>
</feature>
<feature type="compositionally biased region" description="Basic and acidic residues" evidence="1">
    <location>
        <begin position="283"/>
        <end position="298"/>
    </location>
</feature>
<feature type="compositionally biased region" description="Acidic residues" evidence="1">
    <location>
        <begin position="395"/>
        <end position="411"/>
    </location>
</feature>